<feature type="signal peptide" evidence="2">
    <location>
        <begin position="1"/>
        <end position="19"/>
    </location>
</feature>
<feature type="propeptide" id="PRO_0000414957" evidence="1">
    <location>
        <begin position="20"/>
        <end position="48"/>
    </location>
</feature>
<feature type="peptide" id="PRO_0000414958" description="Conotoxin Cl1.1">
    <location>
        <begin position="50"/>
        <end position="60"/>
    </location>
</feature>
<keyword id="KW-1015">Disulfide bond</keyword>
<keyword id="KW-0528">Neurotoxin</keyword>
<keyword id="KW-0964">Secreted</keyword>
<keyword id="KW-0732">Signal</keyword>
<keyword id="KW-0800">Toxin</keyword>
<evidence type="ECO:0000250" key="1"/>
<evidence type="ECO:0000255" key="2"/>
<evidence type="ECO:0000305" key="3"/>
<protein>
    <recommendedName>
        <fullName>Conotoxin Cl1.1</fullName>
    </recommendedName>
</protein>
<dbReference type="EMBL" id="FJ959117">
    <property type="protein sequence ID" value="ADB93087.1"/>
    <property type="molecule type" value="Genomic_DNA"/>
</dbReference>
<dbReference type="ConoServer" id="4003">
    <property type="toxin name" value="Cal1.1 precursor"/>
</dbReference>
<dbReference type="GO" id="GO:0005576">
    <property type="term" value="C:extracellular region"/>
    <property type="evidence" value="ECO:0007669"/>
    <property type="project" value="UniProtKB-SubCell"/>
</dbReference>
<dbReference type="GO" id="GO:0090729">
    <property type="term" value="F:toxin activity"/>
    <property type="evidence" value="ECO:0007669"/>
    <property type="project" value="UniProtKB-KW"/>
</dbReference>
<proteinExistence type="inferred from homology"/>
<comment type="subcellular location">
    <subcellularLocation>
        <location evidence="1">Secreted</location>
    </subcellularLocation>
</comment>
<comment type="tissue specificity">
    <text>Expressed by the venom duct.</text>
</comment>
<comment type="domain">
    <text>The cysteine framework is I (CC-C-C). Alpha4/2 pattern.</text>
</comment>
<comment type="PTM">
    <text evidence="1">Contains 2 disulfide bonds.</text>
</comment>
<comment type="similarity">
    <text evidence="3">Belongs to the conotoxin T superfamily.</text>
</comment>
<sequence>MRCLPVIVILLLLISSAAAVVEGPLRVNRRLRPRKAPVDMQARDWNWGRCCFLSGCFECW</sequence>
<organism>
    <name type="scientific">Californiconus californicus</name>
    <name type="common">California cone</name>
    <name type="synonym">Conus californicus</name>
    <dbReference type="NCBI Taxonomy" id="1736779"/>
    <lineage>
        <taxon>Eukaryota</taxon>
        <taxon>Metazoa</taxon>
        <taxon>Spiralia</taxon>
        <taxon>Lophotrochozoa</taxon>
        <taxon>Mollusca</taxon>
        <taxon>Gastropoda</taxon>
        <taxon>Caenogastropoda</taxon>
        <taxon>Neogastropoda</taxon>
        <taxon>Conoidea</taxon>
        <taxon>Conidae</taxon>
        <taxon>Californiconus</taxon>
    </lineage>
</organism>
<accession>D6C4H5</accession>
<reference key="1">
    <citation type="journal article" date="2010" name="Mol. Phylogenet. Evol.">
        <title>Evolution of Conus peptide toxins: analysis of Conus californicus Reeve, 1844.</title>
        <authorList>
            <person name="Biggs J.S."/>
            <person name="Watkins M."/>
            <person name="Puillandre N."/>
            <person name="Ownby J.P."/>
            <person name="Lopez-Vera E."/>
            <person name="Christensen S."/>
            <person name="Moreno K.J."/>
            <person name="Bernaldez J."/>
            <person name="Licea-Navarro A."/>
            <person name="Corneli P.S."/>
            <person name="Olivera B.M."/>
        </authorList>
    </citation>
    <scope>NUCLEOTIDE SEQUENCE [GENOMIC DNA]</scope>
</reference>
<name>CT11_CONCL</name>